<dbReference type="EMBL" id="V00291">
    <property type="protein sequence ID" value="CAA23561.1"/>
    <property type="molecule type" value="Genomic_DNA"/>
</dbReference>
<dbReference type="EMBL" id="K02844">
    <property type="protein sequence ID" value="AAA51467.1"/>
    <property type="molecule type" value="Genomic_DNA"/>
</dbReference>
<dbReference type="EMBL" id="U00096">
    <property type="protein sequence ID" value="AAC74788.1"/>
    <property type="molecule type" value="Genomic_DNA"/>
</dbReference>
<dbReference type="EMBL" id="AP009048">
    <property type="protein sequence ID" value="BAA15485.1"/>
    <property type="molecule type" value="Genomic_DNA"/>
</dbReference>
<dbReference type="PIR" id="S13748">
    <property type="entry name" value="FIEC3"/>
</dbReference>
<dbReference type="RefSeq" id="NP_416233.1">
    <property type="nucleotide sequence ID" value="NC_000913.3"/>
</dbReference>
<dbReference type="RefSeq" id="WP_001700733.1">
    <property type="nucleotide sequence ID" value="NZ_STEB01000009.1"/>
</dbReference>
<dbReference type="PDB" id="2IFE">
    <property type="method" value="NMR"/>
    <property type="chains" value="A=81-180"/>
</dbReference>
<dbReference type="PDB" id="5ME0">
    <property type="method" value="EM"/>
    <property type="resolution" value="13.50 A"/>
    <property type="chains" value="Z=38-180"/>
</dbReference>
<dbReference type="PDB" id="5ME1">
    <property type="method" value="EM"/>
    <property type="resolution" value="13.50 A"/>
    <property type="chains" value="Z=37-180"/>
</dbReference>
<dbReference type="PDB" id="8JSG">
    <property type="method" value="EM"/>
    <property type="resolution" value="4.60 A"/>
    <property type="chains" value="A=1-180"/>
</dbReference>
<dbReference type="PDB" id="8JSH">
    <property type="method" value="EM"/>
    <property type="resolution" value="4.40 A"/>
    <property type="chains" value="A=1-180"/>
</dbReference>
<dbReference type="PDBsum" id="2IFE"/>
<dbReference type="PDBsum" id="5ME0"/>
<dbReference type="PDBsum" id="5ME1"/>
<dbReference type="PDBsum" id="8JSG"/>
<dbReference type="PDBsum" id="8JSH"/>
<dbReference type="BMRB" id="P0A707"/>
<dbReference type="EMDB" id="EMD-3494"/>
<dbReference type="SMR" id="P0A707"/>
<dbReference type="BioGRID" id="4262192">
    <property type="interactions" value="118"/>
</dbReference>
<dbReference type="ComplexPortal" id="CPX-2244">
    <property type="entry name" value="Translation initiation factor complex"/>
</dbReference>
<dbReference type="DIP" id="DIP-36176N"/>
<dbReference type="FunCoup" id="P0A707">
    <property type="interactions" value="752"/>
</dbReference>
<dbReference type="IntAct" id="P0A707">
    <property type="interactions" value="51"/>
</dbReference>
<dbReference type="STRING" id="511145.b1718"/>
<dbReference type="ChEMBL" id="CHEMBL1075077"/>
<dbReference type="iPTMnet" id="P0A707"/>
<dbReference type="jPOST" id="P0A707"/>
<dbReference type="PaxDb" id="511145-b1718"/>
<dbReference type="EnsemblBacteria" id="AAC74788">
    <property type="protein sequence ID" value="AAC74788"/>
    <property type="gene ID" value="b1718"/>
</dbReference>
<dbReference type="GeneID" id="93775931"/>
<dbReference type="GeneID" id="946225"/>
<dbReference type="KEGG" id="ecj:JW5829"/>
<dbReference type="KEGG" id="eco:b1718"/>
<dbReference type="KEGG" id="ecoc:C3026_09830"/>
<dbReference type="PATRIC" id="fig|511145.12.peg.1788"/>
<dbReference type="EchoBASE" id="EB0501"/>
<dbReference type="eggNOG" id="COG0290">
    <property type="taxonomic scope" value="Bacteria"/>
</dbReference>
<dbReference type="HOGENOM" id="CLU_054919_3_2_6"/>
<dbReference type="InParanoid" id="P0A707"/>
<dbReference type="OMA" id="KCTVIFR"/>
<dbReference type="OrthoDB" id="9806014at2"/>
<dbReference type="PhylomeDB" id="P0A707"/>
<dbReference type="BioCyc" id="EcoCyc:EG10506-MONOMER"/>
<dbReference type="EvolutionaryTrace" id="P0A707"/>
<dbReference type="PRO" id="PR:P0A707"/>
<dbReference type="Proteomes" id="UP000000625">
    <property type="component" value="Chromosome"/>
</dbReference>
<dbReference type="GO" id="GO:0005829">
    <property type="term" value="C:cytosol"/>
    <property type="evidence" value="ECO:0000314"/>
    <property type="project" value="EcoCyc"/>
</dbReference>
<dbReference type="GO" id="GO:0016020">
    <property type="term" value="C:membrane"/>
    <property type="evidence" value="ECO:0007005"/>
    <property type="project" value="UniProtKB"/>
</dbReference>
<dbReference type="GO" id="GO:0043022">
    <property type="term" value="F:ribosome binding"/>
    <property type="evidence" value="ECO:0000314"/>
    <property type="project" value="EcoCyc"/>
</dbReference>
<dbReference type="GO" id="GO:0003723">
    <property type="term" value="F:RNA binding"/>
    <property type="evidence" value="ECO:0007669"/>
    <property type="project" value="UniProtKB-KW"/>
</dbReference>
<dbReference type="GO" id="GO:0003743">
    <property type="term" value="F:translation initiation factor activity"/>
    <property type="evidence" value="ECO:0000314"/>
    <property type="project" value="EcoCyc"/>
</dbReference>
<dbReference type="GO" id="GO:0009409">
    <property type="term" value="P:response to cold"/>
    <property type="evidence" value="ECO:0000314"/>
    <property type="project" value="EcoCyc"/>
</dbReference>
<dbReference type="GO" id="GO:0032790">
    <property type="term" value="P:ribosome disassembly"/>
    <property type="evidence" value="ECO:0000315"/>
    <property type="project" value="EcoCyc"/>
</dbReference>
<dbReference type="DisProt" id="DP00197"/>
<dbReference type="FunFam" id="3.10.20.80:FF:000001">
    <property type="entry name" value="Translation initiation factor IF-3"/>
    <property type="match status" value="1"/>
</dbReference>
<dbReference type="FunFam" id="3.30.110.10:FF:000001">
    <property type="entry name" value="Translation initiation factor IF-3"/>
    <property type="match status" value="1"/>
</dbReference>
<dbReference type="Gene3D" id="3.30.110.10">
    <property type="entry name" value="Translation initiation factor 3 (IF-3), C-terminal domain"/>
    <property type="match status" value="1"/>
</dbReference>
<dbReference type="Gene3D" id="3.10.20.80">
    <property type="entry name" value="Translation initiation factor 3 (IF-3), N-terminal domain"/>
    <property type="match status" value="1"/>
</dbReference>
<dbReference type="HAMAP" id="MF_00080">
    <property type="entry name" value="IF_3"/>
    <property type="match status" value="1"/>
</dbReference>
<dbReference type="InterPro" id="IPR036788">
    <property type="entry name" value="T_IF-3_C_sf"/>
</dbReference>
<dbReference type="InterPro" id="IPR036787">
    <property type="entry name" value="T_IF-3_N_sf"/>
</dbReference>
<dbReference type="InterPro" id="IPR019813">
    <property type="entry name" value="Translation_initiation_fac3_CS"/>
</dbReference>
<dbReference type="InterPro" id="IPR001288">
    <property type="entry name" value="Translation_initiation_fac_3"/>
</dbReference>
<dbReference type="InterPro" id="IPR019815">
    <property type="entry name" value="Translation_initiation_fac_3_C"/>
</dbReference>
<dbReference type="InterPro" id="IPR019814">
    <property type="entry name" value="Translation_initiation_fac_3_N"/>
</dbReference>
<dbReference type="NCBIfam" id="TIGR00168">
    <property type="entry name" value="infC"/>
    <property type="match status" value="1"/>
</dbReference>
<dbReference type="PANTHER" id="PTHR10938">
    <property type="entry name" value="TRANSLATION INITIATION FACTOR IF-3"/>
    <property type="match status" value="1"/>
</dbReference>
<dbReference type="PANTHER" id="PTHR10938:SF0">
    <property type="entry name" value="TRANSLATION INITIATION FACTOR IF-3, MITOCHONDRIAL"/>
    <property type="match status" value="1"/>
</dbReference>
<dbReference type="Pfam" id="PF00707">
    <property type="entry name" value="IF3_C"/>
    <property type="match status" value="1"/>
</dbReference>
<dbReference type="Pfam" id="PF05198">
    <property type="entry name" value="IF3_N"/>
    <property type="match status" value="1"/>
</dbReference>
<dbReference type="SUPFAM" id="SSF55200">
    <property type="entry name" value="Translation initiation factor IF3, C-terminal domain"/>
    <property type="match status" value="1"/>
</dbReference>
<dbReference type="SUPFAM" id="SSF54364">
    <property type="entry name" value="Translation initiation factor IF3, N-terminal domain"/>
    <property type="match status" value="1"/>
</dbReference>
<dbReference type="PROSITE" id="PS00938">
    <property type="entry name" value="IF3"/>
    <property type="match status" value="1"/>
</dbReference>
<evidence type="ECO:0000255" key="1">
    <source>
        <dbReference type="HAMAP-Rule" id="MF_00080"/>
    </source>
</evidence>
<evidence type="ECO:0000269" key="2">
    <source>
    </source>
</evidence>
<evidence type="ECO:0000269" key="3">
    <source>
    </source>
</evidence>
<evidence type="ECO:0000269" key="4">
    <source>
    </source>
</evidence>
<evidence type="ECO:0000269" key="5">
    <source>
    </source>
</evidence>
<evidence type="ECO:0000305" key="6"/>
<evidence type="ECO:0000305" key="7">
    <source>
    </source>
</evidence>
<evidence type="ECO:0000305" key="8">
    <source>
    </source>
</evidence>
<evidence type="ECO:0000305" key="9">
    <source>
    </source>
</evidence>
<evidence type="ECO:0000305" key="10">
    <source>
    </source>
</evidence>
<evidence type="ECO:0007829" key="11">
    <source>
        <dbReference type="PDB" id="2IFE"/>
    </source>
</evidence>
<feature type="chain" id="PRO_0000367498" description="Translation initiation factor IF-3" evidence="10">
    <location>
        <begin position="1"/>
        <end position="180"/>
    </location>
</feature>
<feature type="initiator methionine" description="Removed; alternate" evidence="5">
    <location>
        <position position="1"/>
    </location>
</feature>
<feature type="chain" id="PRO_0000014499" description="Translation initiation factor IF-3, N-terminally processed" evidence="10">
    <location>
        <begin position="2"/>
        <end position="180"/>
    </location>
</feature>
<feature type="chain" id="PRO_0000364089" description="Translation initiation factor IF-3S" evidence="10">
    <location>
        <begin position="7"/>
        <end position="180"/>
    </location>
</feature>
<feature type="site" description="Important for 30S binding" evidence="7">
    <location>
        <position position="107"/>
    </location>
</feature>
<feature type="site" description="Important for 30S binding" evidence="7">
    <location>
        <position position="110"/>
    </location>
</feature>
<feature type="modified residue" description="N-methylmethionine; in Translation initiation factor IF-3; alternate" evidence="5">
    <location>
        <position position="1"/>
    </location>
</feature>
<feature type="mutagenesis site" description="Reduced ribosome binding." evidence="2">
    <original>Y</original>
    <variation>F</variation>
    <variation>L</variation>
    <location>
        <position position="107"/>
    </location>
</feature>
<feature type="mutagenesis site" description="Reduced ribosome binding." evidence="2">
    <original>K</original>
    <variation>R</variation>
    <variation>L</variation>
    <location>
        <position position="110"/>
    </location>
</feature>
<feature type="sequence conflict" description="In Ref. 1; AA sequence." evidence="6" ref="1">
    <original>Q</original>
    <variation>E</variation>
    <location>
        <position position="22"/>
    </location>
</feature>
<feature type="sequence conflict" description="In Ref. 1; AA sequence." evidence="6" ref="1">
    <original>LGI</original>
    <variation>IGMV</variation>
    <location>
        <begin position="34"/>
        <end position="36"/>
    </location>
</feature>
<feature type="sequence conflict" description="In Ref. 1; AA sequence." evidence="6" ref="1">
    <original>E</original>
    <variation>Q</variation>
    <location>
        <position position="47"/>
    </location>
</feature>
<feature type="sequence conflict" description="In Ref. 1; AA sequence." evidence="6" ref="1">
    <original>D</original>
    <variation>N</variation>
    <location>
        <position position="52"/>
    </location>
</feature>
<feature type="sequence conflict" description="In Ref. 1; AA sequence." evidence="6" ref="1">
    <original>E</original>
    <variation>Q</variation>
    <location>
        <position position="61"/>
    </location>
</feature>
<feature type="sequence conflict" description="In Ref. 1; AA sequence." evidence="6" ref="1">
    <original>K</original>
    <variation>E</variation>
    <location>
        <position position="87"/>
    </location>
</feature>
<feature type="sequence conflict" description="In Ref. 1; AA sequence." evidence="6" ref="1">
    <original>V</original>
    <variation>K</variation>
    <location>
        <position position="90"/>
    </location>
</feature>
<feature type="sequence conflict" description="In Ref. 1; AA sequence." evidence="6" ref="1">
    <original>D</original>
    <variation>N</variation>
    <location>
        <position position="103"/>
    </location>
</feature>
<feature type="sequence conflict" description="In Ref. 1; AA sequence." evidence="6" ref="1">
    <original>G</original>
    <variation>N</variation>
    <location>
        <position position="105"/>
    </location>
</feature>
<feature type="sequence conflict" description="In Ref. 3; AAA51467." evidence="6" ref="3">
    <original>F</original>
    <variation>S</variation>
    <location>
        <position position="161"/>
    </location>
</feature>
<feature type="sequence conflict" description="In Ref. 1; AA sequence." evidence="6" ref="1">
    <original>K</original>
    <variation>Q</variation>
    <location>
        <position position="178"/>
    </location>
</feature>
<feature type="sequence conflict" description="In Ref. 1; AA sequence." evidence="6" ref="1">
    <location>
        <position position="180"/>
    </location>
</feature>
<feature type="strand" evidence="11">
    <location>
        <begin position="92"/>
        <end position="98"/>
    </location>
</feature>
<feature type="helix" evidence="11">
    <location>
        <begin position="104"/>
        <end position="107"/>
    </location>
</feature>
<feature type="helix" evidence="11">
    <location>
        <begin position="109"/>
        <end position="119"/>
    </location>
</feature>
<feature type="strand" evidence="11">
    <location>
        <begin position="122"/>
        <end position="128"/>
    </location>
</feature>
<feature type="helix" evidence="11">
    <location>
        <begin position="140"/>
        <end position="152"/>
    </location>
</feature>
<feature type="turn" evidence="11">
    <location>
        <begin position="153"/>
        <end position="155"/>
    </location>
</feature>
<feature type="strand" evidence="11">
    <location>
        <begin position="156"/>
        <end position="159"/>
    </location>
</feature>
<feature type="strand" evidence="11">
    <location>
        <begin position="171"/>
        <end position="176"/>
    </location>
</feature>
<keyword id="KW-0002">3D-structure</keyword>
<keyword id="KW-0165">Cleavage on pair of basic residues</keyword>
<keyword id="KW-0963">Cytoplasm</keyword>
<keyword id="KW-0903">Direct protein sequencing</keyword>
<keyword id="KW-0396">Initiation factor</keyword>
<keyword id="KW-0488">Methylation</keyword>
<keyword id="KW-0597">Phosphoprotein</keyword>
<keyword id="KW-0648">Protein biosynthesis</keyword>
<keyword id="KW-1185">Reference proteome</keyword>
<keyword id="KW-0694">RNA-binding</keyword>
<protein>
    <recommendedName>
        <fullName evidence="1">Translation initiation factor IF-3</fullName>
    </recommendedName>
    <component>
        <recommendedName>
            <fullName evidence="1">Translation initiation factor IF-3, N-terminally processed</fullName>
        </recommendedName>
    </component>
    <component>
        <recommendedName>
            <fullName evidence="1">Translation initiation factor IF-3S</fullName>
        </recommendedName>
    </component>
</protein>
<accession>P0A707</accession>
<accession>P02999</accession>
<accession>P76905</accession>
<comment type="function">
    <text evidence="4">One of the essential components for the initiation of protein synthesis. IF-3 binds to the 30S ribosomal subunit and shifts the equilibrium between 70S ribosomes and their 50S and 30S subunits in favor of the free subunits, thus enhancing the availability of 30S subunits on which protein synthesis initiation begins.</text>
</comment>
<comment type="subunit">
    <text evidence="4">Monomer. Component of the 30S ribosomal translation pre-initiation complex which assembles on the 30S ribosome in the order IF-2 and IF-3, IF-1 and N-formylmethionyl-tRNA(fMet); mRNA recruitment can occur at any time during PIC assembly.</text>
</comment>
<comment type="interaction">
    <interactant intactId="EBI-546262">
        <id>P0A707</id>
    </interactant>
    <interactant intactId="EBI-543074">
        <id>P02359</id>
        <label>rpsG</label>
    </interactant>
    <organismsDiffer>false</organismsDiffer>
    <experiments>4</experiments>
</comment>
<comment type="subcellular location">
    <subcellularLocation>
        <location evidence="5">Cytoplasm</location>
    </subcellularLocation>
</comment>
<comment type="PTM">
    <text evidence="3">Phosphorylated on threonine residue(s).</text>
</comment>
<comment type="PTM">
    <text evidence="5">The form lacking the initiator methionine is less abundant than the N-methylmethionine form.</text>
</comment>
<comment type="miscellaneous">
    <text evidence="5">A short form called IF-3S/IF-3 beta is found both in vivo and in vitro and is probably produced by degradation of the long form IF-3L/IF-3 alpha. The major form is the N-methylmethionine long form.</text>
</comment>
<comment type="miscellaneous">
    <text evidence="8">Uses the non-canonical initiation codon AUU, which limits its expression (PubMed:16857585).</text>
</comment>
<comment type="similarity">
    <text evidence="1">Belongs to the IF-3 family.</text>
</comment>
<comment type="caution">
    <text evidence="8 9">Was originally (PubMed:2954162) thought to control the translation of its own gene by binding to its mRNA; it now seems that discrimination against the AUU start codon is a kinetic effect (PubMed:16857585).</text>
</comment>
<gene>
    <name evidence="1" type="primary">infC</name>
    <name type="synonym">fit</name>
    <name type="synonym">srjA</name>
    <name type="ordered locus">b1718</name>
    <name type="ordered locus">JW5829</name>
</gene>
<sequence>MKGGKRVQTARPNRINGEIRAQEVRLTGLEGEQLGIVSLREALEKAEEAGVDLVEISPNAEPPVCRIMDYGKFLYEKSKSSKEQKKKQKVIQVKEIKFRPGTDEGDYQVKLRSLIRFLEEGDKAKITLRFRGREMAHQQIGMEVLNRVKDDLQELAVVESFPTKIEGRQMIMVLAPKKKQ</sequence>
<reference key="1">
    <citation type="journal article" date="1977" name="FEBS Lett.">
        <title>The primary structure of the initiation factor IF-3 from Escherichia coli.</title>
        <authorList>
            <person name="Brauer D."/>
            <person name="Wittmann-Liebold B."/>
        </authorList>
    </citation>
    <scope>PROTEIN SEQUENCE</scope>
    <scope>DIFFERENT PROTEIN FORMS</scope>
    <scope>SUBCELLULAR LOCATION</scope>
    <scope>METHYLATION AT MET-1</scope>
    <source>
        <strain>K</strain>
    </source>
</reference>
<reference key="2">
    <citation type="journal article" date="1982" name="EMBO J.">
        <title>Sequence of a 1.26-kb DNA fragment containing the structural gene for E.coli initiation factor IF3: presence of an AUU initiator codon.</title>
        <authorList>
            <person name="Sacerdot C."/>
            <person name="Fayat G."/>
            <person name="Dessen P."/>
            <person name="Springer M."/>
            <person name="Plumbridge J.A."/>
            <person name="Grunberg-Manago M."/>
            <person name="Blanquet S."/>
        </authorList>
    </citation>
    <scope>NUCLEOTIDE SEQUENCE [GENOMIC DNA]</scope>
</reference>
<reference key="3">
    <citation type="submission" date="1986-11" db="EMBL/GenBank/DDBJ databases">
        <authorList>
            <person name="Miller H.I."/>
        </authorList>
    </citation>
    <scope>NUCLEOTIDE SEQUENCE [GENOMIC DNA]</scope>
</reference>
<reference key="4">
    <citation type="journal article" date="1996" name="DNA Res.">
        <title>A 570-kb DNA sequence of the Escherichia coli K-12 genome corresponding to the 28.0-40.1 min region on the linkage map.</title>
        <authorList>
            <person name="Aiba H."/>
            <person name="Baba T."/>
            <person name="Fujita K."/>
            <person name="Hayashi K."/>
            <person name="Inada T."/>
            <person name="Isono K."/>
            <person name="Itoh T."/>
            <person name="Kasai H."/>
            <person name="Kashimoto K."/>
            <person name="Kimura S."/>
            <person name="Kitakawa M."/>
            <person name="Kitagawa M."/>
            <person name="Makino K."/>
            <person name="Miki T."/>
            <person name="Mizobuchi K."/>
            <person name="Mori H."/>
            <person name="Mori T."/>
            <person name="Motomura K."/>
            <person name="Nakade S."/>
            <person name="Nakamura Y."/>
            <person name="Nashimoto H."/>
            <person name="Nishio Y."/>
            <person name="Oshima T."/>
            <person name="Saito N."/>
            <person name="Sampei G."/>
            <person name="Seki Y."/>
            <person name="Sivasundaram S."/>
            <person name="Tagami H."/>
            <person name="Takeda J."/>
            <person name="Takemoto K."/>
            <person name="Takeuchi Y."/>
            <person name="Wada C."/>
            <person name="Yamamoto Y."/>
            <person name="Horiuchi T."/>
        </authorList>
    </citation>
    <scope>NUCLEOTIDE SEQUENCE [LARGE SCALE GENOMIC DNA]</scope>
    <source>
        <strain>K12 / W3110 / ATCC 27325 / DSM 5911</strain>
    </source>
</reference>
<reference key="5">
    <citation type="journal article" date="1997" name="Science">
        <title>The complete genome sequence of Escherichia coli K-12.</title>
        <authorList>
            <person name="Blattner F.R."/>
            <person name="Plunkett G. III"/>
            <person name="Bloch C.A."/>
            <person name="Perna N.T."/>
            <person name="Burland V."/>
            <person name="Riley M."/>
            <person name="Collado-Vides J."/>
            <person name="Glasner J.D."/>
            <person name="Rode C.K."/>
            <person name="Mayhew G.F."/>
            <person name="Gregor J."/>
            <person name="Davis N.W."/>
            <person name="Kirkpatrick H.A."/>
            <person name="Goeden M.A."/>
            <person name="Rose D.J."/>
            <person name="Mau B."/>
            <person name="Shao Y."/>
        </authorList>
    </citation>
    <scope>NUCLEOTIDE SEQUENCE [LARGE SCALE GENOMIC DNA]</scope>
    <source>
        <strain>K12 / MG1655 / ATCC 47076</strain>
    </source>
</reference>
<reference key="6">
    <citation type="journal article" date="2006" name="Mol. Syst. Biol.">
        <title>Highly accurate genome sequences of Escherichia coli K-12 strains MG1655 and W3110.</title>
        <authorList>
            <person name="Hayashi K."/>
            <person name="Morooka N."/>
            <person name="Yamamoto Y."/>
            <person name="Fujita K."/>
            <person name="Isono K."/>
            <person name="Choi S."/>
            <person name="Ohtsubo E."/>
            <person name="Baba T."/>
            <person name="Wanner B.L."/>
            <person name="Mori H."/>
            <person name="Horiuchi T."/>
        </authorList>
    </citation>
    <scope>NUCLEOTIDE SEQUENCE [LARGE SCALE GENOMIC DNA]</scope>
    <source>
        <strain>K12 / W3110 / ATCC 27325 / DSM 5911</strain>
    </source>
</reference>
<reference key="7">
    <citation type="journal article" date="1977" name="FEBS Lett.">
        <title>Separation of two forms of IF-3 in Escherichia coli by two-dimensional gel electrophoresis.</title>
        <authorList>
            <person name="Suryanarayana T."/>
            <person name="Subramanian A.R."/>
        </authorList>
    </citation>
    <scope>DIFFERENT PROTEIN FORMS</scope>
    <source>
        <strain>Al9</strain>
        <strain>CP78</strain>
        <strain>K</strain>
        <strain>MRE600</strain>
    </source>
</reference>
<reference key="8">
    <citation type="journal article" date="1992" name="Biochemistry">
        <title>Phosphorylation of Escherichia coli translation initiation factors by the bacteriophage T7 protein kinase.</title>
        <authorList>
            <person name="Robertson E.S."/>
            <person name="Nicholson A.W."/>
        </authorList>
    </citation>
    <scope>PHOSPHORYLATION</scope>
</reference>
<reference key="9">
    <citation type="journal article" date="1992" name="Biochemistry">
        <title>Structure-function analysis of Escherichia coli translation initiation factor IF3: tyrosine 107 and lysine 110 are required for ribosome binding.</title>
        <authorList>
            <person name="Debellis D."/>
            <person name="Liveris D."/>
            <person name="Goss D."/>
            <person name="Ringquist S."/>
            <person name="Schwartz I."/>
        </authorList>
    </citation>
    <scope>MUTAGENESIS OF TYR-107 AND LYS-110</scope>
</reference>
<reference key="10">
    <citation type="journal article" date="1987" name="Proc. Natl. Acad. Sci. U.S.A.">
        <title>AUU-to-AUG mutation in the initiator codon of the translation initiation factor IF3 abolishes translational autocontrol of its own gene (infC) in vivo.</title>
        <authorList>
            <person name="Butler J.S."/>
            <person name="Springer M."/>
            <person name="Grunberg-Manago M."/>
        </authorList>
    </citation>
    <scope>MECHANISM OF TRANSLATION REGULATION</scope>
</reference>
<reference key="11">
    <citation type="journal article" date="1997" name="Electrophoresis">
        <title>Escherichia coli proteome analysis using the gene-protein database.</title>
        <authorList>
            <person name="VanBogelen R.A."/>
            <person name="Abshire K.Z."/>
            <person name="Moldover B."/>
            <person name="Olson E.R."/>
            <person name="Neidhardt F.C."/>
        </authorList>
    </citation>
    <scope>IDENTIFICATION BY 2D-GEL</scope>
</reference>
<reference key="12">
    <citation type="journal article" date="2006" name="Mol. Cell">
        <title>How initiation factors maximize the accuracy of tRNA selection in initiation of bacterial protein synthesis.</title>
        <authorList>
            <person name="Antoun A."/>
            <person name="Pavlov M.Y."/>
            <person name="Lovmar M."/>
            <person name="Ehrenberg M."/>
        </authorList>
    </citation>
    <scope>MECHANISM OF TRANSLATION REGULATION</scope>
</reference>
<reference key="13">
    <citation type="journal article" date="2012" name="Nat. Struct. Mol. Biol.">
        <title>Real-time assembly landscape of bacterial 30S translation initiation complex.</title>
        <authorList>
            <person name="Milon P."/>
            <person name="Maracci C."/>
            <person name="Filonava L."/>
            <person name="Gualerzi C.O."/>
            <person name="Rodnina M.V."/>
        </authorList>
    </citation>
    <scope>FUNCTION</scope>
    <scope>SUBUNIT</scope>
</reference>
<reference key="14">
    <citation type="journal article" date="2012" name="Crit. Rev. Biochem. Mol. Biol.">
        <title>Kinetic control of translation initiation in bacteria.</title>
        <authorList>
            <person name="Milon P."/>
            <person name="Rodnina M.V."/>
        </authorList>
    </citation>
    <scope>REVIEW</scope>
</reference>
<reference key="15">
    <citation type="journal article" date="1991" name="Biochimie">
        <title>Site-directed mutagenesis and NMR spectroscopic approaches to the elucidation of the structure-function relationships in translation initiation factors IF1 and IF3.</title>
        <authorList>
            <person name="Spurio R."/>
            <person name="Paci M."/>
            <person name="Pawlik R.T."/>
            <person name="la Teana A."/>
            <person name="Digiacco B.V."/>
            <person name="Pon C.L."/>
            <person name="Gualerzi C.O."/>
        </authorList>
    </citation>
    <scope>STRUCTURE BY NMR</scope>
    <scope>MUTAGENESIS</scope>
</reference>
<reference key="16">
    <citation type="journal article" date="1995" name="Eur. J. Biochem.">
        <title>1H and 15N resonance assignments and structure of the N-terminal domain of Escherichia coli initiation factor 3.</title>
        <authorList>
            <person name="Garcia C."/>
            <person name="Fortier P.-L."/>
            <person name="Blanquet S."/>
            <person name="Lallemand J.-Y."/>
            <person name="Dardel F."/>
        </authorList>
    </citation>
    <scope>STRUCTURE BY NMR</scope>
</reference>
<reference key="17">
    <citation type="journal article" date="1997" name="J. Mol. Biol.">
        <title>Heteronuclear NMR studies of E. coli translation initiation factor IF3. Evidence that the inter-domain region is disordered in solution.</title>
        <authorList>
            <person name="Moreau M."/>
            <person name="de Cock E."/>
            <person name="Fortier P.-L."/>
            <person name="Garcia C."/>
            <person name="Albaret C."/>
            <person name="Blanquet S."/>
            <person name="Lallemand J.-Y."/>
            <person name="Dardel F."/>
        </authorList>
    </citation>
    <scope>STRUCTURE BY NMR</scope>
</reference>
<reference key="18">
    <citation type="journal article" date="1998" name="J. Mol. Biol.">
        <title>On the global architecture of initiation factor IF3: a comparative study of the linker regions from the Escherichia coli protein and the Bacillus stearothermophilus protein.</title>
        <authorList>
            <person name="Hua Y."/>
            <person name="Raleigh D.P."/>
        </authorList>
    </citation>
    <scope>STRUCTURE BY NMR</scope>
</reference>
<reference key="19">
    <citation type="submission" date="1998-12" db="PDB data bank">
        <authorList>
            <person name="de Cock E."/>
            <person name="Blanquet S."/>
            <person name="Lallemand J.-Y."/>
            <person name="Dardel F."/>
        </authorList>
    </citation>
    <scope>STRUCTURE BY NMR OF 90-180</scope>
</reference>
<reference key="20">
    <citation type="journal article" date="2011" name="PLoS Biol.">
        <title>The cryo-EM structure of a complete 30S translation initiation complex from Escherichia coli.</title>
        <authorList>
            <person name="Julian P."/>
            <person name="Milon P."/>
            <person name="Agirrezabala X."/>
            <person name="Lasso G."/>
            <person name="Gil D."/>
            <person name="Rodnina M.V."/>
            <person name="Valle M."/>
        </authorList>
    </citation>
    <scope>MODEL BY ELECTRON MICROSCOPY (18.3 ANGSTROMS)</scope>
    <scope>SUBUNIT</scope>
</reference>
<organism>
    <name type="scientific">Escherichia coli (strain K12)</name>
    <dbReference type="NCBI Taxonomy" id="83333"/>
    <lineage>
        <taxon>Bacteria</taxon>
        <taxon>Pseudomonadati</taxon>
        <taxon>Pseudomonadota</taxon>
        <taxon>Gammaproteobacteria</taxon>
        <taxon>Enterobacterales</taxon>
        <taxon>Enterobacteriaceae</taxon>
        <taxon>Escherichia</taxon>
    </lineage>
</organism>
<name>IF3_ECOLI</name>
<proteinExistence type="evidence at protein level"/>